<gene>
    <name type="primary">y13I</name>
    <name type="synonym">pseT.1</name>
</gene>
<dbReference type="EMBL" id="AF158101">
    <property type="protein sequence ID" value="AAD42643.1"/>
    <property type="molecule type" value="Genomic_DNA"/>
</dbReference>
<dbReference type="RefSeq" id="NP_049835.1">
    <property type="nucleotide sequence ID" value="NC_000866.4"/>
</dbReference>
<dbReference type="SMR" id="P39502"/>
<dbReference type="GeneID" id="1258684"/>
<dbReference type="KEGG" id="vg:1258684"/>
<dbReference type="OrthoDB" id="21092at10239"/>
<dbReference type="Proteomes" id="UP000009087">
    <property type="component" value="Segment"/>
</dbReference>
<name>Y13I_BPT4</name>
<organism>
    <name type="scientific">Enterobacteria phage T4</name>
    <name type="common">Bacteriophage T4</name>
    <dbReference type="NCBI Taxonomy" id="10665"/>
    <lineage>
        <taxon>Viruses</taxon>
        <taxon>Duplodnaviria</taxon>
        <taxon>Heunggongvirae</taxon>
        <taxon>Uroviricota</taxon>
        <taxon>Caudoviricetes</taxon>
        <taxon>Straboviridae</taxon>
        <taxon>Tevenvirinae</taxon>
        <taxon>Tequatrovirus</taxon>
    </lineage>
</organism>
<reference key="1">
    <citation type="journal article" date="2003" name="Microbiol. Mol. Biol. Rev.">
        <title>Bacteriophage T4 genome.</title>
        <authorList>
            <person name="Miller E.S."/>
            <person name="Kutter E."/>
            <person name="Mosig G."/>
            <person name="Arisaka F."/>
            <person name="Kunisawa T."/>
            <person name="Ruger W."/>
        </authorList>
    </citation>
    <scope>NUCLEOTIDE SEQUENCE [LARGE SCALE GENOMIC DNA]</scope>
</reference>
<protein>
    <recommendedName>
        <fullName>Uncharacterized 8.8 kDa protein in pseT-alc intergenic region</fullName>
    </recommendedName>
</protein>
<sequence>MISWHQFEHLKGLIYESEMAAMIYGRQIQRLESLPPTNDVLLAQSRANLKNEYQNKWGKASKDLHDYIQSLVEKK</sequence>
<accession>P39502</accession>
<feature type="chain" id="PRO_0000165182" description="Uncharacterized 8.8 kDa protein in pseT-alc intergenic region">
    <location>
        <begin position="1"/>
        <end position="75"/>
    </location>
</feature>
<keyword id="KW-1185">Reference proteome</keyword>
<proteinExistence type="predicted"/>
<organismHost>
    <name type="scientific">Escherichia coli</name>
    <dbReference type="NCBI Taxonomy" id="562"/>
</organismHost>